<sequence>MINNKVNVSLSKDLRKKYGIRRFPVAKGDIVKIISGSRKGEGGKVVDVDHKTMKVSIEGVTISKADGKQVPFFIDHSNISITKLDLSRNDRYERLREIAARKNLPPPEVPEETSNDTKESDENVTGADKEETNEIKEEDLNDNEDKNNDGSQEA</sequence>
<evidence type="ECO:0000255" key="1">
    <source>
        <dbReference type="HAMAP-Rule" id="MF_01326"/>
    </source>
</evidence>
<evidence type="ECO:0000256" key="2">
    <source>
        <dbReference type="SAM" id="MobiDB-lite"/>
    </source>
</evidence>
<evidence type="ECO:0000305" key="3"/>
<keyword id="KW-0687">Ribonucleoprotein</keyword>
<keyword id="KW-0689">Ribosomal protein</keyword>
<keyword id="KW-0694">RNA-binding</keyword>
<keyword id="KW-0699">rRNA-binding</keyword>
<reference key="1">
    <citation type="journal article" date="2004" name="Proc. Natl. Acad. Sci. U.S.A.">
        <title>Genome sequence of Picrophilus torridus and its implications for life around pH 0.</title>
        <authorList>
            <person name="Fuetterer O."/>
            <person name="Angelov A."/>
            <person name="Liesegang H."/>
            <person name="Gottschalk G."/>
            <person name="Schleper C."/>
            <person name="Schepers B."/>
            <person name="Dock C."/>
            <person name="Antranikian G."/>
            <person name="Liebl W."/>
        </authorList>
    </citation>
    <scope>NUCLEOTIDE SEQUENCE [LARGE SCALE GENOMIC DNA]</scope>
    <source>
        <strain>ATCC 700027 / DSM 9790 / JCM 10055 / NBRC 100828 / KAW 2/3</strain>
    </source>
</reference>
<organism>
    <name type="scientific">Picrophilus torridus (strain ATCC 700027 / DSM 9790 / JCM 10055 / NBRC 100828 / KAW 2/3)</name>
    <dbReference type="NCBI Taxonomy" id="1122961"/>
    <lineage>
        <taxon>Archaea</taxon>
        <taxon>Methanobacteriati</taxon>
        <taxon>Thermoplasmatota</taxon>
        <taxon>Thermoplasmata</taxon>
        <taxon>Thermoplasmatales</taxon>
        <taxon>Picrophilaceae</taxon>
        <taxon>Picrophilus</taxon>
    </lineage>
</organism>
<name>RL24_PICTO</name>
<feature type="chain" id="PRO_0000355738" description="Large ribosomal subunit protein uL24">
    <location>
        <begin position="1"/>
        <end position="154"/>
    </location>
</feature>
<feature type="region of interest" description="Disordered" evidence="2">
    <location>
        <begin position="97"/>
        <end position="154"/>
    </location>
</feature>
<feature type="compositionally biased region" description="Basic and acidic residues" evidence="2">
    <location>
        <begin position="115"/>
        <end position="135"/>
    </location>
</feature>
<dbReference type="EMBL" id="AE017261">
    <property type="protein sequence ID" value="AAT43236.1"/>
    <property type="molecule type" value="Genomic_DNA"/>
</dbReference>
<dbReference type="RefSeq" id="WP_011177452.1">
    <property type="nucleotide sequence ID" value="NC_005877.1"/>
</dbReference>
<dbReference type="SMR" id="Q6L1B6"/>
<dbReference type="FunCoup" id="Q6L1B6">
    <property type="interactions" value="194"/>
</dbReference>
<dbReference type="STRING" id="263820.PTO0651"/>
<dbReference type="PaxDb" id="263820-PTO0651"/>
<dbReference type="GeneID" id="2844311"/>
<dbReference type="KEGG" id="pto:PTO0651"/>
<dbReference type="PATRIC" id="fig|263820.9.peg.684"/>
<dbReference type="eggNOG" id="arCOG04094">
    <property type="taxonomic scope" value="Archaea"/>
</dbReference>
<dbReference type="HOGENOM" id="CLU_093240_1_0_2"/>
<dbReference type="InParanoid" id="Q6L1B6"/>
<dbReference type="OrthoDB" id="10899at2157"/>
<dbReference type="Proteomes" id="UP000000438">
    <property type="component" value="Chromosome"/>
</dbReference>
<dbReference type="GO" id="GO:0015934">
    <property type="term" value="C:large ribosomal subunit"/>
    <property type="evidence" value="ECO:0007669"/>
    <property type="project" value="InterPro"/>
</dbReference>
<dbReference type="GO" id="GO:0019843">
    <property type="term" value="F:rRNA binding"/>
    <property type="evidence" value="ECO:0007669"/>
    <property type="project" value="UniProtKB-UniRule"/>
</dbReference>
<dbReference type="GO" id="GO:0003735">
    <property type="term" value="F:structural constituent of ribosome"/>
    <property type="evidence" value="ECO:0007669"/>
    <property type="project" value="InterPro"/>
</dbReference>
<dbReference type="GO" id="GO:0006412">
    <property type="term" value="P:translation"/>
    <property type="evidence" value="ECO:0007669"/>
    <property type="project" value="UniProtKB-UniRule"/>
</dbReference>
<dbReference type="CDD" id="cd06089">
    <property type="entry name" value="KOW_RPL26"/>
    <property type="match status" value="1"/>
</dbReference>
<dbReference type="Gene3D" id="2.30.30.30">
    <property type="match status" value="1"/>
</dbReference>
<dbReference type="HAMAP" id="MF_01326_A">
    <property type="entry name" value="Ribosomal_uL24_A"/>
    <property type="match status" value="1"/>
</dbReference>
<dbReference type="InterPro" id="IPR005824">
    <property type="entry name" value="KOW"/>
</dbReference>
<dbReference type="InterPro" id="IPR014722">
    <property type="entry name" value="Rib_uL2_dom2"/>
</dbReference>
<dbReference type="InterPro" id="IPR005825">
    <property type="entry name" value="Ribosomal_uL24_CS"/>
</dbReference>
<dbReference type="InterPro" id="IPR005756">
    <property type="entry name" value="Ribosomal_uL24_euk/arc"/>
</dbReference>
<dbReference type="InterPro" id="IPR041988">
    <property type="entry name" value="Ribosomal_uL24_KOW"/>
</dbReference>
<dbReference type="InterPro" id="IPR008991">
    <property type="entry name" value="Translation_prot_SH3-like_sf"/>
</dbReference>
<dbReference type="NCBIfam" id="TIGR01080">
    <property type="entry name" value="rplX_A_E"/>
    <property type="match status" value="1"/>
</dbReference>
<dbReference type="PANTHER" id="PTHR11143">
    <property type="entry name" value="60S RIBOSOMAL PROTEIN L26 FAMILY MEMBER"/>
    <property type="match status" value="1"/>
</dbReference>
<dbReference type="Pfam" id="PF16906">
    <property type="entry name" value="Ribosomal_L26"/>
    <property type="match status" value="1"/>
</dbReference>
<dbReference type="SMART" id="SM00739">
    <property type="entry name" value="KOW"/>
    <property type="match status" value="1"/>
</dbReference>
<dbReference type="SUPFAM" id="SSF50104">
    <property type="entry name" value="Translation proteins SH3-like domain"/>
    <property type="match status" value="1"/>
</dbReference>
<dbReference type="PROSITE" id="PS01108">
    <property type="entry name" value="RIBOSOMAL_L24"/>
    <property type="match status" value="1"/>
</dbReference>
<comment type="function">
    <text evidence="1">One of two assembly initiator proteins, it binds directly to the 5'-end of the 23S rRNA, where it nucleates assembly of the 50S subunit.</text>
</comment>
<comment type="function">
    <text evidence="1">Located at the polypeptide exit tunnel on the outside of the subunit.</text>
</comment>
<comment type="subunit">
    <text evidence="1">Part of the 50S ribosomal subunit.</text>
</comment>
<comment type="similarity">
    <text evidence="1">Belongs to the universal ribosomal protein uL24 family.</text>
</comment>
<gene>
    <name evidence="1" type="primary">rpl24</name>
    <name type="ordered locus">PTO0651</name>
</gene>
<protein>
    <recommendedName>
        <fullName evidence="1">Large ribosomal subunit protein uL24</fullName>
    </recommendedName>
    <alternativeName>
        <fullName evidence="3">50S ribosomal protein L24</fullName>
    </alternativeName>
</protein>
<proteinExistence type="inferred from homology"/>
<accession>Q6L1B6</accession>